<proteinExistence type="inferred from homology"/>
<organism>
    <name type="scientific">Wolbachia sp. subsp. Brugia malayi (strain TRS)</name>
    <dbReference type="NCBI Taxonomy" id="292805"/>
    <lineage>
        <taxon>Bacteria</taxon>
        <taxon>Pseudomonadati</taxon>
        <taxon>Pseudomonadota</taxon>
        <taxon>Alphaproteobacteria</taxon>
        <taxon>Rickettsiales</taxon>
        <taxon>Anaplasmataceae</taxon>
        <taxon>Wolbachieae</taxon>
        <taxon>Wolbachia</taxon>
    </lineage>
</organism>
<protein>
    <recommendedName>
        <fullName evidence="1">Chaperonin GroEL</fullName>
        <ecNumber evidence="1">5.6.1.7</ecNumber>
    </recommendedName>
    <alternativeName>
        <fullName evidence="1">60 kDa chaperonin</fullName>
    </alternativeName>
    <alternativeName>
        <fullName evidence="1">Chaperonin-60</fullName>
        <shortName evidence="1">Cpn60</shortName>
    </alternativeName>
</protein>
<keyword id="KW-0067">ATP-binding</keyword>
<keyword id="KW-0143">Chaperone</keyword>
<keyword id="KW-0963">Cytoplasm</keyword>
<keyword id="KW-0413">Isomerase</keyword>
<keyword id="KW-0547">Nucleotide-binding</keyword>
<keyword id="KW-1185">Reference proteome</keyword>
<reference key="1">
    <citation type="journal article" date="2005" name="PLoS Biol.">
        <title>The Wolbachia genome of Brugia malayi: endosymbiont evolution within a human pathogenic nematode.</title>
        <authorList>
            <person name="Foster J."/>
            <person name="Ganatra M."/>
            <person name="Kamal I."/>
            <person name="Ware J."/>
            <person name="Makarova K."/>
            <person name="Ivanova N."/>
            <person name="Bhattacharyya A."/>
            <person name="Kapatral V."/>
            <person name="Kumar S."/>
            <person name="Posfai J."/>
            <person name="Vincze T."/>
            <person name="Ingram J."/>
            <person name="Moran L."/>
            <person name="Lapidus A."/>
            <person name="Omelchenko M."/>
            <person name="Kyrpides N."/>
            <person name="Ghedin E."/>
            <person name="Wang S."/>
            <person name="Goltsman E."/>
            <person name="Joukov V."/>
            <person name="Ostrovskaya O."/>
            <person name="Tsukerman K."/>
            <person name="Mazur M."/>
            <person name="Comb D."/>
            <person name="Koonin E."/>
            <person name="Slatko B."/>
        </authorList>
    </citation>
    <scope>NUCLEOTIDE SEQUENCE [LARGE SCALE GENOMIC DNA]</scope>
    <source>
        <strain>TRS</strain>
    </source>
</reference>
<dbReference type="EC" id="5.6.1.7" evidence="1"/>
<dbReference type="EMBL" id="AE017321">
    <property type="protein sequence ID" value="AAW70939.1"/>
    <property type="molecule type" value="Genomic_DNA"/>
</dbReference>
<dbReference type="RefSeq" id="WP_011256549.1">
    <property type="nucleotide sequence ID" value="NC_006833.1"/>
</dbReference>
<dbReference type="SMR" id="Q5GST5"/>
<dbReference type="STRING" id="292805.Wbm0350"/>
<dbReference type="KEGG" id="wbm:Wbm0350"/>
<dbReference type="eggNOG" id="COG0459">
    <property type="taxonomic scope" value="Bacteria"/>
</dbReference>
<dbReference type="HOGENOM" id="CLU_016503_3_0_5"/>
<dbReference type="Proteomes" id="UP000000534">
    <property type="component" value="Chromosome"/>
</dbReference>
<dbReference type="GO" id="GO:0005737">
    <property type="term" value="C:cytoplasm"/>
    <property type="evidence" value="ECO:0007669"/>
    <property type="project" value="UniProtKB-SubCell"/>
</dbReference>
<dbReference type="GO" id="GO:0005524">
    <property type="term" value="F:ATP binding"/>
    <property type="evidence" value="ECO:0007669"/>
    <property type="project" value="UniProtKB-UniRule"/>
</dbReference>
<dbReference type="GO" id="GO:0140662">
    <property type="term" value="F:ATP-dependent protein folding chaperone"/>
    <property type="evidence" value="ECO:0007669"/>
    <property type="project" value="InterPro"/>
</dbReference>
<dbReference type="GO" id="GO:0016853">
    <property type="term" value="F:isomerase activity"/>
    <property type="evidence" value="ECO:0007669"/>
    <property type="project" value="UniProtKB-KW"/>
</dbReference>
<dbReference type="GO" id="GO:0051082">
    <property type="term" value="F:unfolded protein binding"/>
    <property type="evidence" value="ECO:0007669"/>
    <property type="project" value="UniProtKB-UniRule"/>
</dbReference>
<dbReference type="GO" id="GO:0042026">
    <property type="term" value="P:protein refolding"/>
    <property type="evidence" value="ECO:0007669"/>
    <property type="project" value="UniProtKB-UniRule"/>
</dbReference>
<dbReference type="CDD" id="cd03344">
    <property type="entry name" value="GroEL"/>
    <property type="match status" value="1"/>
</dbReference>
<dbReference type="FunFam" id="3.50.7.10:FF:000001">
    <property type="entry name" value="60 kDa chaperonin"/>
    <property type="match status" value="1"/>
</dbReference>
<dbReference type="Gene3D" id="3.50.7.10">
    <property type="entry name" value="GroEL"/>
    <property type="match status" value="1"/>
</dbReference>
<dbReference type="Gene3D" id="1.10.560.10">
    <property type="entry name" value="GroEL-like equatorial domain"/>
    <property type="match status" value="1"/>
</dbReference>
<dbReference type="Gene3D" id="3.30.260.10">
    <property type="entry name" value="TCP-1-like chaperonin intermediate domain"/>
    <property type="match status" value="1"/>
</dbReference>
<dbReference type="HAMAP" id="MF_00600">
    <property type="entry name" value="CH60"/>
    <property type="match status" value="1"/>
</dbReference>
<dbReference type="InterPro" id="IPR018370">
    <property type="entry name" value="Chaperonin_Cpn60_CS"/>
</dbReference>
<dbReference type="InterPro" id="IPR001844">
    <property type="entry name" value="Cpn60/GroEL"/>
</dbReference>
<dbReference type="InterPro" id="IPR002423">
    <property type="entry name" value="Cpn60/GroEL/TCP-1"/>
</dbReference>
<dbReference type="InterPro" id="IPR027409">
    <property type="entry name" value="GroEL-like_apical_dom_sf"/>
</dbReference>
<dbReference type="InterPro" id="IPR027413">
    <property type="entry name" value="GROEL-like_equatorial_sf"/>
</dbReference>
<dbReference type="InterPro" id="IPR027410">
    <property type="entry name" value="TCP-1-like_intermed_sf"/>
</dbReference>
<dbReference type="NCBIfam" id="TIGR02348">
    <property type="entry name" value="GroEL"/>
    <property type="match status" value="1"/>
</dbReference>
<dbReference type="NCBIfam" id="NF000592">
    <property type="entry name" value="PRK00013.1"/>
    <property type="match status" value="1"/>
</dbReference>
<dbReference type="NCBIfam" id="NF009487">
    <property type="entry name" value="PRK12849.1"/>
    <property type="match status" value="1"/>
</dbReference>
<dbReference type="NCBIfam" id="NF009488">
    <property type="entry name" value="PRK12850.1"/>
    <property type="match status" value="1"/>
</dbReference>
<dbReference type="NCBIfam" id="NF009489">
    <property type="entry name" value="PRK12851.1"/>
    <property type="match status" value="1"/>
</dbReference>
<dbReference type="PANTHER" id="PTHR45633">
    <property type="entry name" value="60 KDA HEAT SHOCK PROTEIN, MITOCHONDRIAL"/>
    <property type="match status" value="1"/>
</dbReference>
<dbReference type="Pfam" id="PF00118">
    <property type="entry name" value="Cpn60_TCP1"/>
    <property type="match status" value="1"/>
</dbReference>
<dbReference type="PRINTS" id="PR00298">
    <property type="entry name" value="CHAPERONIN60"/>
</dbReference>
<dbReference type="SUPFAM" id="SSF52029">
    <property type="entry name" value="GroEL apical domain-like"/>
    <property type="match status" value="1"/>
</dbReference>
<dbReference type="SUPFAM" id="SSF48592">
    <property type="entry name" value="GroEL equatorial domain-like"/>
    <property type="match status" value="1"/>
</dbReference>
<dbReference type="SUPFAM" id="SSF54849">
    <property type="entry name" value="GroEL-intermediate domain like"/>
    <property type="match status" value="1"/>
</dbReference>
<dbReference type="PROSITE" id="PS00296">
    <property type="entry name" value="CHAPERONINS_CPN60"/>
    <property type="match status" value="1"/>
</dbReference>
<sequence length="550" mass="58810">MTNVVVSGEQLQEAFREVAVMVDSTVAITAGPRGKTVGINKPYGAPEITKDGYKVMKGIKPEKPLHAAITSIFAQSCFQCNDKVGDGTTTCSILTSNMIMEALKSIAAGNDRVSIKNGMQKAKDAVLEGITSMSRTIPLEKMDEVAQVAIISANGDKDIGNSIADAVKKVGKEGVITVEESKGSKELEVELTTGMQFDRGYLSPYFITSNEKMIVEFDDPYLLITEKKLSIIQPLLPILEAVVKSGKPLLIIAEDIEGEALSTLVINKLRGGLKVTAVKAPGFGDRRKEMLEDIAALTGAKYVIKDELGIKMEDLTLEDLGTAKNVKVTKDNTTIVSGSSDSDRVKARVEQIKSQIETSTSDYDKEKLRERLAKLSGGVAVLKVGGVTEVEVKERRDRVEDALHATRAAIEEGIVPGGGVALLYASSALDKLKGGSDEEQIGINIIKKVLSAPIKRLVKNAGLESAVIIDHLTKQNDKELIYNVEAMNYANAFTAGVIDPAKVVRIAFETAISVASVLITTESMIVDVPNKEENASSSMGAGGMGGMNGF</sequence>
<gene>
    <name evidence="1" type="primary">groEL</name>
    <name evidence="1" type="synonym">groL</name>
    <name type="ordered locus">Wbm0350</name>
</gene>
<name>CH60_WOLTR</name>
<comment type="function">
    <text evidence="1">Together with its co-chaperonin GroES, plays an essential role in assisting protein folding. The GroEL-GroES system forms a nano-cage that allows encapsulation of the non-native substrate proteins and provides a physical environment optimized to promote and accelerate protein folding.</text>
</comment>
<comment type="catalytic activity">
    <reaction evidence="1">
        <text>ATP + H2O + a folded polypeptide = ADP + phosphate + an unfolded polypeptide.</text>
        <dbReference type="EC" id="5.6.1.7"/>
    </reaction>
</comment>
<comment type="subunit">
    <text evidence="1">Forms a cylinder of 14 subunits composed of two heptameric rings stacked back-to-back. Interacts with the co-chaperonin GroES.</text>
</comment>
<comment type="subcellular location">
    <subcellularLocation>
        <location evidence="1">Cytoplasm</location>
    </subcellularLocation>
</comment>
<comment type="similarity">
    <text evidence="1">Belongs to the chaperonin (HSP60) family.</text>
</comment>
<feature type="chain" id="PRO_0000257018" description="Chaperonin GroEL">
    <location>
        <begin position="1"/>
        <end position="550"/>
    </location>
</feature>
<feature type="binding site" evidence="1">
    <location>
        <begin position="29"/>
        <end position="32"/>
    </location>
    <ligand>
        <name>ATP</name>
        <dbReference type="ChEBI" id="CHEBI:30616"/>
    </ligand>
</feature>
<feature type="binding site" evidence="1">
    <location>
        <position position="50"/>
    </location>
    <ligand>
        <name>ATP</name>
        <dbReference type="ChEBI" id="CHEBI:30616"/>
    </ligand>
</feature>
<feature type="binding site" evidence="1">
    <location>
        <begin position="86"/>
        <end position="90"/>
    </location>
    <ligand>
        <name>ATP</name>
        <dbReference type="ChEBI" id="CHEBI:30616"/>
    </ligand>
</feature>
<feature type="binding site" evidence="1">
    <location>
        <position position="418"/>
    </location>
    <ligand>
        <name>ATP</name>
        <dbReference type="ChEBI" id="CHEBI:30616"/>
    </ligand>
</feature>
<feature type="binding site" evidence="1">
    <location>
        <position position="499"/>
    </location>
    <ligand>
        <name>ATP</name>
        <dbReference type="ChEBI" id="CHEBI:30616"/>
    </ligand>
</feature>
<accession>Q5GST5</accession>
<evidence type="ECO:0000255" key="1">
    <source>
        <dbReference type="HAMAP-Rule" id="MF_00600"/>
    </source>
</evidence>